<name>ATG1T_ARATH</name>
<feature type="chain" id="PRO_0000434622" description="Serine/threonine-protein kinase ATG1t">
    <location>
        <begin position="1"/>
        <end position="408"/>
    </location>
</feature>
<feature type="domain" description="Protein kinase" evidence="2">
    <location>
        <begin position="7"/>
        <end position="272"/>
    </location>
</feature>
<feature type="active site" description="Proton acceptor" evidence="2">
    <location>
        <position position="129"/>
    </location>
</feature>
<feature type="binding site" evidence="2">
    <location>
        <begin position="13"/>
        <end position="21"/>
    </location>
    <ligand>
        <name>ATP</name>
        <dbReference type="ChEBI" id="CHEBI:30616"/>
    </ligand>
</feature>
<feature type="binding site" evidence="2">
    <location>
        <position position="36"/>
    </location>
    <ligand>
        <name>ATP</name>
        <dbReference type="ChEBI" id="CHEBI:30616"/>
    </ligand>
</feature>
<comment type="function">
    <text evidence="1">Serine/threonine protein kinase involved in autophagy. The ATG1-ATG13 protein kinase complex regulates downstream events required for autophagosome enclosure and/or vacuolar delivery.</text>
</comment>
<comment type="subcellular location">
    <subcellularLocation>
        <location evidence="1">Cytoplasmic vesicle</location>
        <location evidence="1">Autophagosome</location>
    </subcellularLocation>
</comment>
<comment type="alternative products">
    <event type="alternative splicing"/>
    <isoform>
        <id>F4I1N8-1</id>
        <name>1</name>
        <sequence type="displayed"/>
    </isoform>
    <text evidence="3">A number of isoforms are produced. According to EST sequences.</text>
</comment>
<comment type="similarity">
    <text evidence="2">Belongs to the protein kinase superfamily. Ser/Thr protein kinase family.</text>
</comment>
<comment type="sequence caution" evidence="3">
    <conflict type="erroneous gene model prediction">
        <sequence resource="EMBL-CDS" id="AAF69696"/>
    </conflict>
</comment>
<comment type="sequence caution" evidence="3">
    <conflict type="erroneous initiation">
        <sequence resource="EMBL-CDS" id="BAF00185"/>
    </conflict>
    <text>Extended N-terminus.</text>
</comment>
<comment type="sequence caution" evidence="3">
    <conflict type="frameshift">
        <sequence resource="EMBL-CDS" id="BAF00185"/>
    </conflict>
</comment>
<proteinExistence type="evidence at transcript level"/>
<gene>
    <name evidence="4" type="ordered locus">At1g49180</name>
    <name evidence="5" type="ORF">F27J15.5</name>
</gene>
<dbReference type="EC" id="2.7.11.-"/>
<dbReference type="EMBL" id="AC016041">
    <property type="protein sequence ID" value="AAF69696.1"/>
    <property type="status" value="ALT_SEQ"/>
    <property type="molecule type" value="Genomic_DNA"/>
</dbReference>
<dbReference type="EMBL" id="CP002684">
    <property type="protein sequence ID" value="AEE32400.1"/>
    <property type="molecule type" value="Genomic_DNA"/>
</dbReference>
<dbReference type="EMBL" id="AK228237">
    <property type="protein sequence ID" value="BAF00185.1"/>
    <property type="status" value="ALT_SEQ"/>
    <property type="molecule type" value="mRNA"/>
</dbReference>
<dbReference type="RefSeq" id="NP_175344.2">
    <molecule id="F4I1N8-1"/>
    <property type="nucleotide sequence ID" value="NM_103808.2"/>
</dbReference>
<dbReference type="SMR" id="F4I1N8"/>
<dbReference type="FunCoup" id="F4I1N8">
    <property type="interactions" value="669"/>
</dbReference>
<dbReference type="STRING" id="3702.F4I1N8"/>
<dbReference type="PaxDb" id="3702-AT1G49180.1"/>
<dbReference type="EnsemblPlants" id="AT1G49180.1">
    <molecule id="F4I1N8-1"/>
    <property type="protein sequence ID" value="AT1G49180.1"/>
    <property type="gene ID" value="AT1G49180"/>
</dbReference>
<dbReference type="GeneID" id="841341"/>
<dbReference type="Gramene" id="AT1G49180.1">
    <molecule id="F4I1N8-1"/>
    <property type="protein sequence ID" value="AT1G49180.1"/>
    <property type="gene ID" value="AT1G49180"/>
</dbReference>
<dbReference type="KEGG" id="ath:AT1G49180"/>
<dbReference type="Araport" id="AT1G49180"/>
<dbReference type="TAIR" id="AT1G49180"/>
<dbReference type="eggNOG" id="KOG0595">
    <property type="taxonomic scope" value="Eukaryota"/>
</dbReference>
<dbReference type="eggNOG" id="KOG0969">
    <property type="taxonomic scope" value="Eukaryota"/>
</dbReference>
<dbReference type="HOGENOM" id="CLU_675020_0_0_1"/>
<dbReference type="InParanoid" id="F4I1N8"/>
<dbReference type="PRO" id="PR:F4I1N8"/>
<dbReference type="Proteomes" id="UP000006548">
    <property type="component" value="Chromosome 1"/>
</dbReference>
<dbReference type="ExpressionAtlas" id="F4I1N8">
    <property type="expression patterns" value="baseline and differential"/>
</dbReference>
<dbReference type="GO" id="GO:0005776">
    <property type="term" value="C:autophagosome"/>
    <property type="evidence" value="ECO:0007669"/>
    <property type="project" value="UniProtKB-SubCell"/>
</dbReference>
<dbReference type="GO" id="GO:0031410">
    <property type="term" value="C:cytoplasmic vesicle"/>
    <property type="evidence" value="ECO:0007669"/>
    <property type="project" value="UniProtKB-KW"/>
</dbReference>
<dbReference type="GO" id="GO:0005524">
    <property type="term" value="F:ATP binding"/>
    <property type="evidence" value="ECO:0007669"/>
    <property type="project" value="UniProtKB-KW"/>
</dbReference>
<dbReference type="GO" id="GO:0003676">
    <property type="term" value="F:nucleic acid binding"/>
    <property type="evidence" value="ECO:0007669"/>
    <property type="project" value="InterPro"/>
</dbReference>
<dbReference type="GO" id="GO:0004674">
    <property type="term" value="F:protein serine/threonine kinase activity"/>
    <property type="evidence" value="ECO:0007669"/>
    <property type="project" value="UniProtKB-KW"/>
</dbReference>
<dbReference type="GO" id="GO:0006914">
    <property type="term" value="P:autophagy"/>
    <property type="evidence" value="ECO:0007669"/>
    <property type="project" value="UniProtKB-KW"/>
</dbReference>
<dbReference type="GO" id="GO:0015031">
    <property type="term" value="P:protein transport"/>
    <property type="evidence" value="ECO:0007669"/>
    <property type="project" value="UniProtKB-KW"/>
</dbReference>
<dbReference type="GO" id="GO:0010506">
    <property type="term" value="P:regulation of autophagy"/>
    <property type="evidence" value="ECO:0007669"/>
    <property type="project" value="InterPro"/>
</dbReference>
<dbReference type="CDD" id="cd14009">
    <property type="entry name" value="STKc_ATG1_ULK_like"/>
    <property type="match status" value="1"/>
</dbReference>
<dbReference type="FunFam" id="3.30.420.10:FF:000436">
    <property type="match status" value="1"/>
</dbReference>
<dbReference type="FunFam" id="1.10.510.10:FF:001224">
    <property type="entry name" value="Serine/threonine-protein kinase ATG1t"/>
    <property type="match status" value="1"/>
</dbReference>
<dbReference type="Gene3D" id="3.30.200.20">
    <property type="entry name" value="Phosphorylase Kinase, domain 1"/>
    <property type="match status" value="1"/>
</dbReference>
<dbReference type="Gene3D" id="3.30.420.10">
    <property type="entry name" value="Ribonuclease H-like superfamily/Ribonuclease H"/>
    <property type="match status" value="1"/>
</dbReference>
<dbReference type="Gene3D" id="1.10.510.10">
    <property type="entry name" value="Transferase(Phosphotransferase) domain 1"/>
    <property type="match status" value="1"/>
</dbReference>
<dbReference type="InterPro" id="IPR045269">
    <property type="entry name" value="Atg1-like"/>
</dbReference>
<dbReference type="InterPro" id="IPR011009">
    <property type="entry name" value="Kinase-like_dom_sf"/>
</dbReference>
<dbReference type="InterPro" id="IPR000719">
    <property type="entry name" value="Prot_kinase_dom"/>
</dbReference>
<dbReference type="InterPro" id="IPR012337">
    <property type="entry name" value="RNaseH-like_sf"/>
</dbReference>
<dbReference type="InterPro" id="IPR036397">
    <property type="entry name" value="RNaseH_sf"/>
</dbReference>
<dbReference type="InterPro" id="IPR008271">
    <property type="entry name" value="Ser/Thr_kinase_AS"/>
</dbReference>
<dbReference type="PANTHER" id="PTHR24348">
    <property type="entry name" value="SERINE/THREONINE-PROTEIN KINASE UNC-51-RELATED"/>
    <property type="match status" value="1"/>
</dbReference>
<dbReference type="PANTHER" id="PTHR24348:SF53">
    <property type="entry name" value="SERINE_THREONINE-PROTEIN KINASE ATG1T"/>
    <property type="match status" value="1"/>
</dbReference>
<dbReference type="Pfam" id="PF00069">
    <property type="entry name" value="Pkinase"/>
    <property type="match status" value="1"/>
</dbReference>
<dbReference type="SMART" id="SM00220">
    <property type="entry name" value="S_TKc"/>
    <property type="match status" value="1"/>
</dbReference>
<dbReference type="SUPFAM" id="SSF56112">
    <property type="entry name" value="Protein kinase-like (PK-like)"/>
    <property type="match status" value="1"/>
</dbReference>
<dbReference type="SUPFAM" id="SSF53098">
    <property type="entry name" value="Ribonuclease H-like"/>
    <property type="match status" value="1"/>
</dbReference>
<dbReference type="PROSITE" id="PS50011">
    <property type="entry name" value="PROTEIN_KINASE_DOM"/>
    <property type="match status" value="1"/>
</dbReference>
<dbReference type="PROSITE" id="PS00108">
    <property type="entry name" value="PROTEIN_KINASE_ST"/>
    <property type="match status" value="1"/>
</dbReference>
<sequence>MMMLDDYIAKSKLSESLTSTVWLAKHKLTGEEAVMKCFDLSKLNRNLRDCLNNELEFLSSVDHPNIIRLLHVSQDDDFLVMVLEYCDGGTLSSYIQRYGRVEEDIAKRFMKQIGAGLEIIHDNHIIHRDLKPENILIDGSGDDLVLKIADFSLARKLHPGKYLETVCGSPFYMAPEVLQFQRYNEKADMWSVGAILFELLHGYPPFRGNNNVQVLRNIKSSTALPFSRLILQQMHPDCIDVCSRLLSINPAATLGIEDFPFLGRIKNSRVWVKDTTFSSRQHGTRERKVATINGRLQFDLSQDAYLPQRLLENLMYIYNTIEMARVTGVPTSYLISRGESIKVLSQLLRKAKQKTWFFQMLRSWNLNKELMKVQLYVGGFISPTYSFTYSSITSNILINISNDIYSHC</sequence>
<organism>
    <name type="scientific">Arabidopsis thaliana</name>
    <name type="common">Mouse-ear cress</name>
    <dbReference type="NCBI Taxonomy" id="3702"/>
    <lineage>
        <taxon>Eukaryota</taxon>
        <taxon>Viridiplantae</taxon>
        <taxon>Streptophyta</taxon>
        <taxon>Embryophyta</taxon>
        <taxon>Tracheophyta</taxon>
        <taxon>Spermatophyta</taxon>
        <taxon>Magnoliopsida</taxon>
        <taxon>eudicotyledons</taxon>
        <taxon>Gunneridae</taxon>
        <taxon>Pentapetalae</taxon>
        <taxon>rosids</taxon>
        <taxon>malvids</taxon>
        <taxon>Brassicales</taxon>
        <taxon>Brassicaceae</taxon>
        <taxon>Camelineae</taxon>
        <taxon>Arabidopsis</taxon>
    </lineage>
</organism>
<reference key="1">
    <citation type="journal article" date="2000" name="Nature">
        <title>Sequence and analysis of chromosome 1 of the plant Arabidopsis thaliana.</title>
        <authorList>
            <person name="Theologis A."/>
            <person name="Ecker J.R."/>
            <person name="Palm C.J."/>
            <person name="Federspiel N.A."/>
            <person name="Kaul S."/>
            <person name="White O."/>
            <person name="Alonso J."/>
            <person name="Altafi H."/>
            <person name="Araujo R."/>
            <person name="Bowman C.L."/>
            <person name="Brooks S.Y."/>
            <person name="Buehler E."/>
            <person name="Chan A."/>
            <person name="Chao Q."/>
            <person name="Chen H."/>
            <person name="Cheuk R.F."/>
            <person name="Chin C.W."/>
            <person name="Chung M.K."/>
            <person name="Conn L."/>
            <person name="Conway A.B."/>
            <person name="Conway A.R."/>
            <person name="Creasy T.H."/>
            <person name="Dewar K."/>
            <person name="Dunn P."/>
            <person name="Etgu P."/>
            <person name="Feldblyum T.V."/>
            <person name="Feng J.-D."/>
            <person name="Fong B."/>
            <person name="Fujii C.Y."/>
            <person name="Gill J.E."/>
            <person name="Goldsmith A.D."/>
            <person name="Haas B."/>
            <person name="Hansen N.F."/>
            <person name="Hughes B."/>
            <person name="Huizar L."/>
            <person name="Hunter J.L."/>
            <person name="Jenkins J."/>
            <person name="Johnson-Hopson C."/>
            <person name="Khan S."/>
            <person name="Khaykin E."/>
            <person name="Kim C.J."/>
            <person name="Koo H.L."/>
            <person name="Kremenetskaia I."/>
            <person name="Kurtz D.B."/>
            <person name="Kwan A."/>
            <person name="Lam B."/>
            <person name="Langin-Hooper S."/>
            <person name="Lee A."/>
            <person name="Lee J.M."/>
            <person name="Lenz C.A."/>
            <person name="Li J.H."/>
            <person name="Li Y.-P."/>
            <person name="Lin X."/>
            <person name="Liu S.X."/>
            <person name="Liu Z.A."/>
            <person name="Luros J.S."/>
            <person name="Maiti R."/>
            <person name="Marziali A."/>
            <person name="Militscher J."/>
            <person name="Miranda M."/>
            <person name="Nguyen M."/>
            <person name="Nierman W.C."/>
            <person name="Osborne B.I."/>
            <person name="Pai G."/>
            <person name="Peterson J."/>
            <person name="Pham P.K."/>
            <person name="Rizzo M."/>
            <person name="Rooney T."/>
            <person name="Rowley D."/>
            <person name="Sakano H."/>
            <person name="Salzberg S.L."/>
            <person name="Schwartz J.R."/>
            <person name="Shinn P."/>
            <person name="Southwick A.M."/>
            <person name="Sun H."/>
            <person name="Tallon L.J."/>
            <person name="Tambunga G."/>
            <person name="Toriumi M.J."/>
            <person name="Town C.D."/>
            <person name="Utterback T."/>
            <person name="Van Aken S."/>
            <person name="Vaysberg M."/>
            <person name="Vysotskaia V.S."/>
            <person name="Walker M."/>
            <person name="Wu D."/>
            <person name="Yu G."/>
            <person name="Fraser C.M."/>
            <person name="Venter J.C."/>
            <person name="Davis R.W."/>
        </authorList>
    </citation>
    <scope>NUCLEOTIDE SEQUENCE [LARGE SCALE GENOMIC DNA]</scope>
    <source>
        <strain>cv. Columbia</strain>
    </source>
</reference>
<reference key="2">
    <citation type="journal article" date="2017" name="Plant J.">
        <title>Araport11: a complete reannotation of the Arabidopsis thaliana reference genome.</title>
        <authorList>
            <person name="Cheng C.Y."/>
            <person name="Krishnakumar V."/>
            <person name="Chan A.P."/>
            <person name="Thibaud-Nissen F."/>
            <person name="Schobel S."/>
            <person name="Town C.D."/>
        </authorList>
    </citation>
    <scope>GENOME REANNOTATION</scope>
    <source>
        <strain>cv. Columbia</strain>
    </source>
</reference>
<reference key="3">
    <citation type="submission" date="2006-07" db="EMBL/GenBank/DDBJ databases">
        <title>Large-scale analysis of RIKEN Arabidopsis full-length (RAFL) cDNAs.</title>
        <authorList>
            <person name="Totoki Y."/>
            <person name="Seki M."/>
            <person name="Ishida J."/>
            <person name="Nakajima M."/>
            <person name="Enju A."/>
            <person name="Kamiya A."/>
            <person name="Narusaka M."/>
            <person name="Shin-i T."/>
            <person name="Nakagawa M."/>
            <person name="Sakamoto N."/>
            <person name="Oishi K."/>
            <person name="Kohara Y."/>
            <person name="Kobayashi M."/>
            <person name="Toyoda A."/>
            <person name="Sakaki Y."/>
            <person name="Sakurai T."/>
            <person name="Iida K."/>
            <person name="Akiyama K."/>
            <person name="Satou M."/>
            <person name="Toyoda T."/>
            <person name="Konagaya A."/>
            <person name="Carninci P."/>
            <person name="Kawai J."/>
            <person name="Hayashizaki Y."/>
            <person name="Shinozaki K."/>
        </authorList>
    </citation>
    <scope>NUCLEOTIDE SEQUENCE [LARGE SCALE MRNA]</scope>
    <source>
        <strain>cv. Columbia</strain>
    </source>
</reference>
<protein>
    <recommendedName>
        <fullName evidence="3">Serine/threonine-protein kinase ATG1t</fullName>
        <ecNumber>2.7.11.-</ecNumber>
    </recommendedName>
    <alternativeName>
        <fullName evidence="3">Autophagy-related protein 1t</fullName>
    </alternativeName>
</protein>
<evidence type="ECO:0000250" key="1">
    <source>
        <dbReference type="UniProtKB" id="Q94C95"/>
    </source>
</evidence>
<evidence type="ECO:0000255" key="2">
    <source>
        <dbReference type="PROSITE-ProRule" id="PRU00159"/>
    </source>
</evidence>
<evidence type="ECO:0000305" key="3"/>
<evidence type="ECO:0000312" key="4">
    <source>
        <dbReference type="Araport" id="AT1G49180"/>
    </source>
</evidence>
<evidence type="ECO:0000312" key="5">
    <source>
        <dbReference type="EMBL" id="AAF69696.1"/>
    </source>
</evidence>
<accession>F4I1N8</accession>
<accession>Q0WRR4</accession>
<accession>Q9M9B8</accession>
<keyword id="KW-0025">Alternative splicing</keyword>
<keyword id="KW-0067">ATP-binding</keyword>
<keyword id="KW-0072">Autophagy</keyword>
<keyword id="KW-0968">Cytoplasmic vesicle</keyword>
<keyword id="KW-0418">Kinase</keyword>
<keyword id="KW-0547">Nucleotide-binding</keyword>
<keyword id="KW-0653">Protein transport</keyword>
<keyword id="KW-1185">Reference proteome</keyword>
<keyword id="KW-0723">Serine/threonine-protein kinase</keyword>
<keyword id="KW-0808">Transferase</keyword>
<keyword id="KW-0813">Transport</keyword>